<comment type="function">
    <text evidence="1">Catalyzes the transfer of endogenously produced octanoic acid from octanoyl-acyl-carrier-protein onto the lipoyl domains of lipoate-dependent enzymes. Lipoyl-ACP can also act as a substrate although octanoyl-ACP is likely to be the physiological substrate (By similarity).</text>
</comment>
<comment type="catalytic activity">
    <reaction>
        <text>octanoyl-[ACP] + L-lysyl-[protein] = N(6)-octanoyl-L-lysyl-[protein] + holo-[ACP] + H(+)</text>
        <dbReference type="Rhea" id="RHEA:17665"/>
        <dbReference type="Rhea" id="RHEA-COMP:9636"/>
        <dbReference type="Rhea" id="RHEA-COMP:9685"/>
        <dbReference type="Rhea" id="RHEA-COMP:9752"/>
        <dbReference type="Rhea" id="RHEA-COMP:9928"/>
        <dbReference type="ChEBI" id="CHEBI:15378"/>
        <dbReference type="ChEBI" id="CHEBI:29969"/>
        <dbReference type="ChEBI" id="CHEBI:64479"/>
        <dbReference type="ChEBI" id="CHEBI:78463"/>
        <dbReference type="ChEBI" id="CHEBI:78809"/>
        <dbReference type="EC" id="2.3.1.181"/>
    </reaction>
</comment>
<comment type="pathway">
    <text>Protein modification; protein lipoylation via endogenous pathway; protein N(6)-(lipoyl)lysine from octanoyl-[acyl-carrier-protein]: step 1/2.</text>
</comment>
<comment type="subcellular location">
    <subcellularLocation>
        <location evidence="5">Mitochondrion</location>
    </subcellularLocation>
</comment>
<comment type="miscellaneous">
    <text evidence="4">Present with 1200 molecules/cell in log phase SD medium.</text>
</comment>
<comment type="miscellaneous">
    <text evidence="1">In the reaction, the free carboxyl group of octanoic acid is attached via an amide linkage to the epsilon-amino group of a specific lysine residue of lipoyl domains of lipoate-dependent enzymes.</text>
</comment>
<comment type="similarity">
    <text evidence="5">Belongs to the LipB family.</text>
</comment>
<proteinExistence type="evidence at protein level"/>
<evidence type="ECO:0000250" key="1"/>
<evidence type="ECO:0000255" key="2"/>
<evidence type="ECO:0000255" key="3">
    <source>
        <dbReference type="PROSITE-ProRule" id="PRU01067"/>
    </source>
</evidence>
<evidence type="ECO:0000269" key="4">
    <source>
    </source>
</evidence>
<evidence type="ECO:0000305" key="5"/>
<protein>
    <recommendedName>
        <fullName>Octanoyltransferase, mitochondrial</fullName>
        <ecNumber>2.3.1.181</ecNumber>
    </recommendedName>
    <alternativeName>
        <fullName>Lipoate biosynthesis protein</fullName>
    </alternativeName>
    <alternativeName>
        <fullName>Lipoate-protein ligase</fullName>
    </alternativeName>
    <alternativeName>
        <fullName>Lipoyl ligase</fullName>
    </alternativeName>
    <alternativeName>
        <fullName>Lipoyl/octanoyl transferase</fullName>
    </alternativeName>
    <alternativeName>
        <fullName>Octanoyl-[acyl-carrier-protein]-protein N-octanoyltransferase</fullName>
    </alternativeName>
</protein>
<sequence>MSRCIRQSVCTNFNVCRRQCFSTYASALKEMTHPIKPSAQTLRHLQFTQRIPFQKGLEIQETLVRANLDIKDIQSKIERKLIQLDEEYKGTATINDNEKRILDKVMAMKPNPIILTFEFEPTYTGGKRIKKTMTPDQIAAYESFIPETQKDNPRPKFVQVERGGQVTFHGPGQIVIYIILDLKTFQSFPAKCLVSCIEQATIRTLKNTKMCDDTDKPLNLDAMTTKDTGVWVENGKKKVASVGIHVRRSITSHGVAINVNTDLSYMNSFEMCGLKNTLTTSIMEQRPDAVVNVQSVAISFVKEMTKLLGIKTLERMQIDDVNILKKNP</sequence>
<keyword id="KW-0012">Acyltransferase</keyword>
<keyword id="KW-0496">Mitochondrion</keyword>
<keyword id="KW-1185">Reference proteome</keyword>
<keyword id="KW-0808">Transferase</keyword>
<keyword id="KW-0809">Transit peptide</keyword>
<dbReference type="EC" id="2.3.1.181"/>
<dbReference type="EMBL" id="U19027">
    <property type="protein sequence ID" value="AAB67419.1"/>
    <property type="molecule type" value="Genomic_DNA"/>
</dbReference>
<dbReference type="EMBL" id="BK006945">
    <property type="protein sequence ID" value="DAA09553.1"/>
    <property type="molecule type" value="Genomic_DNA"/>
</dbReference>
<dbReference type="PIR" id="S51458">
    <property type="entry name" value="S51458"/>
</dbReference>
<dbReference type="RefSeq" id="NP_013340.1">
    <property type="nucleotide sequence ID" value="NM_001182126.1"/>
</dbReference>
<dbReference type="SMR" id="Q06005"/>
<dbReference type="BioGRID" id="31506">
    <property type="interactions" value="396"/>
</dbReference>
<dbReference type="DIP" id="DIP-2776N"/>
<dbReference type="FunCoup" id="Q06005">
    <property type="interactions" value="535"/>
</dbReference>
<dbReference type="IntAct" id="Q06005">
    <property type="interactions" value="5"/>
</dbReference>
<dbReference type="MINT" id="Q06005"/>
<dbReference type="STRING" id="4932.YLR239C"/>
<dbReference type="PaxDb" id="4932-YLR239C"/>
<dbReference type="PeptideAtlas" id="Q06005"/>
<dbReference type="EnsemblFungi" id="YLR239C_mRNA">
    <property type="protein sequence ID" value="YLR239C"/>
    <property type="gene ID" value="YLR239C"/>
</dbReference>
<dbReference type="GeneID" id="850940"/>
<dbReference type="KEGG" id="sce:YLR239C"/>
<dbReference type="AGR" id="SGD:S000004229"/>
<dbReference type="SGD" id="S000004229">
    <property type="gene designation" value="LIP2"/>
</dbReference>
<dbReference type="VEuPathDB" id="FungiDB:YLR239C"/>
<dbReference type="eggNOG" id="KOG0325">
    <property type="taxonomic scope" value="Eukaryota"/>
</dbReference>
<dbReference type="GeneTree" id="ENSGT00390000006450"/>
<dbReference type="HOGENOM" id="CLU_035168_0_1_1"/>
<dbReference type="InParanoid" id="Q06005"/>
<dbReference type="OMA" id="FEMCGLP"/>
<dbReference type="OrthoDB" id="19908at2759"/>
<dbReference type="BioCyc" id="MetaCyc:YLR239C-MONOMER"/>
<dbReference type="BioCyc" id="YEAST:YLR239C-MONOMER"/>
<dbReference type="Reactome" id="R-SCE-9857492">
    <property type="pathway name" value="Protein lipoylation"/>
</dbReference>
<dbReference type="UniPathway" id="UPA00538">
    <property type="reaction ID" value="UER00592"/>
</dbReference>
<dbReference type="BioGRID-ORCS" id="850940">
    <property type="hits" value="4 hits in 10 CRISPR screens"/>
</dbReference>
<dbReference type="PRO" id="PR:Q06005"/>
<dbReference type="Proteomes" id="UP000002311">
    <property type="component" value="Chromosome XII"/>
</dbReference>
<dbReference type="RNAct" id="Q06005">
    <property type="molecule type" value="protein"/>
</dbReference>
<dbReference type="GO" id="GO:0005739">
    <property type="term" value="C:mitochondrion"/>
    <property type="evidence" value="ECO:0007005"/>
    <property type="project" value="SGD"/>
</dbReference>
<dbReference type="GO" id="GO:0016874">
    <property type="term" value="F:ligase activity"/>
    <property type="evidence" value="ECO:0000315"/>
    <property type="project" value="SGD"/>
</dbReference>
<dbReference type="GO" id="GO:0033819">
    <property type="term" value="F:lipoyl(octanoyl) transferase activity"/>
    <property type="evidence" value="ECO:0000318"/>
    <property type="project" value="GO_Central"/>
</dbReference>
<dbReference type="GO" id="GO:0036211">
    <property type="term" value="P:protein modification process"/>
    <property type="evidence" value="ECO:0007669"/>
    <property type="project" value="InterPro"/>
</dbReference>
<dbReference type="CDD" id="cd16444">
    <property type="entry name" value="LipB"/>
    <property type="match status" value="1"/>
</dbReference>
<dbReference type="Gene3D" id="3.30.930.10">
    <property type="entry name" value="Bira Bifunctional Protein, Domain 2"/>
    <property type="match status" value="1"/>
</dbReference>
<dbReference type="InterPro" id="IPR045864">
    <property type="entry name" value="aa-tRNA-synth_II/BPL/LPL"/>
</dbReference>
<dbReference type="InterPro" id="IPR004143">
    <property type="entry name" value="BPL_LPL_catalytic"/>
</dbReference>
<dbReference type="InterPro" id="IPR000544">
    <property type="entry name" value="Octanoyltransferase"/>
</dbReference>
<dbReference type="InterPro" id="IPR020605">
    <property type="entry name" value="Octanoyltransferase_CS"/>
</dbReference>
<dbReference type="NCBIfam" id="TIGR00214">
    <property type="entry name" value="lipB"/>
    <property type="match status" value="1"/>
</dbReference>
<dbReference type="PANTHER" id="PTHR10993:SF7">
    <property type="entry name" value="LIPOYLTRANSFERASE 2, MITOCHONDRIAL-RELATED"/>
    <property type="match status" value="1"/>
</dbReference>
<dbReference type="PANTHER" id="PTHR10993">
    <property type="entry name" value="OCTANOYLTRANSFERASE"/>
    <property type="match status" value="1"/>
</dbReference>
<dbReference type="Pfam" id="PF21948">
    <property type="entry name" value="LplA-B_cat"/>
    <property type="match status" value="1"/>
</dbReference>
<dbReference type="PIRSF" id="PIRSF016262">
    <property type="entry name" value="LPLase"/>
    <property type="match status" value="1"/>
</dbReference>
<dbReference type="SUPFAM" id="SSF55681">
    <property type="entry name" value="Class II aaRS and biotin synthetases"/>
    <property type="match status" value="1"/>
</dbReference>
<dbReference type="PROSITE" id="PS51733">
    <property type="entry name" value="BPL_LPL_CATALYTIC"/>
    <property type="match status" value="1"/>
</dbReference>
<dbReference type="PROSITE" id="PS01313">
    <property type="entry name" value="LIPB"/>
    <property type="match status" value="1"/>
</dbReference>
<gene>
    <name type="primary">LIP2</name>
    <name type="ordered locus">YLR239C</name>
    <name type="ORF">L8083.16</name>
</gene>
<organism>
    <name type="scientific">Saccharomyces cerevisiae (strain ATCC 204508 / S288c)</name>
    <name type="common">Baker's yeast</name>
    <dbReference type="NCBI Taxonomy" id="559292"/>
    <lineage>
        <taxon>Eukaryota</taxon>
        <taxon>Fungi</taxon>
        <taxon>Dikarya</taxon>
        <taxon>Ascomycota</taxon>
        <taxon>Saccharomycotina</taxon>
        <taxon>Saccharomycetes</taxon>
        <taxon>Saccharomycetales</taxon>
        <taxon>Saccharomycetaceae</taxon>
        <taxon>Saccharomyces</taxon>
    </lineage>
</organism>
<reference key="1">
    <citation type="journal article" date="1997" name="Nature">
        <title>The nucleotide sequence of Saccharomyces cerevisiae chromosome XII.</title>
        <authorList>
            <person name="Johnston M."/>
            <person name="Hillier L.W."/>
            <person name="Riles L."/>
            <person name="Albermann K."/>
            <person name="Andre B."/>
            <person name="Ansorge W."/>
            <person name="Benes V."/>
            <person name="Brueckner M."/>
            <person name="Delius H."/>
            <person name="Dubois E."/>
            <person name="Duesterhoeft A."/>
            <person name="Entian K.-D."/>
            <person name="Floeth M."/>
            <person name="Goffeau A."/>
            <person name="Hebling U."/>
            <person name="Heumann K."/>
            <person name="Heuss-Neitzel D."/>
            <person name="Hilbert H."/>
            <person name="Hilger F."/>
            <person name="Kleine K."/>
            <person name="Koetter P."/>
            <person name="Louis E.J."/>
            <person name="Messenguy F."/>
            <person name="Mewes H.-W."/>
            <person name="Miosga T."/>
            <person name="Moestl D."/>
            <person name="Mueller-Auer S."/>
            <person name="Nentwich U."/>
            <person name="Obermaier B."/>
            <person name="Piravandi E."/>
            <person name="Pohl T.M."/>
            <person name="Portetelle D."/>
            <person name="Purnelle B."/>
            <person name="Rechmann S."/>
            <person name="Rieger M."/>
            <person name="Rinke M."/>
            <person name="Rose M."/>
            <person name="Scharfe M."/>
            <person name="Scherens B."/>
            <person name="Scholler P."/>
            <person name="Schwager C."/>
            <person name="Schwarz S."/>
            <person name="Underwood A.P."/>
            <person name="Urrestarazu L.A."/>
            <person name="Vandenbol M."/>
            <person name="Verhasselt P."/>
            <person name="Vierendeels F."/>
            <person name="Voet M."/>
            <person name="Volckaert G."/>
            <person name="Voss H."/>
            <person name="Wambutt R."/>
            <person name="Wedler E."/>
            <person name="Wedler H."/>
            <person name="Zimmermann F.K."/>
            <person name="Zollner A."/>
            <person name="Hani J."/>
            <person name="Hoheisel J.D."/>
        </authorList>
    </citation>
    <scope>NUCLEOTIDE SEQUENCE [LARGE SCALE GENOMIC DNA]</scope>
    <source>
        <strain>ATCC 204508 / S288c</strain>
    </source>
</reference>
<reference key="2">
    <citation type="journal article" date="2014" name="G3 (Bethesda)">
        <title>The reference genome sequence of Saccharomyces cerevisiae: Then and now.</title>
        <authorList>
            <person name="Engel S.R."/>
            <person name="Dietrich F.S."/>
            <person name="Fisk D.G."/>
            <person name="Binkley G."/>
            <person name="Balakrishnan R."/>
            <person name="Costanzo M.C."/>
            <person name="Dwight S.S."/>
            <person name="Hitz B.C."/>
            <person name="Karra K."/>
            <person name="Nash R.S."/>
            <person name="Weng S."/>
            <person name="Wong E.D."/>
            <person name="Lloyd P."/>
            <person name="Skrzypek M.S."/>
            <person name="Miyasato S.R."/>
            <person name="Simison M."/>
            <person name="Cherry J.M."/>
        </authorList>
    </citation>
    <scope>GENOME REANNOTATION</scope>
    <source>
        <strain>ATCC 204508 / S288c</strain>
    </source>
</reference>
<reference key="3">
    <citation type="journal article" date="2003" name="Nature">
        <title>Global analysis of protein expression in yeast.</title>
        <authorList>
            <person name="Ghaemmaghami S."/>
            <person name="Huh W.-K."/>
            <person name="Bower K."/>
            <person name="Howson R.W."/>
            <person name="Belle A."/>
            <person name="Dephoure N."/>
            <person name="O'Shea E.K."/>
            <person name="Weissman J.S."/>
        </authorList>
    </citation>
    <scope>LEVEL OF PROTEIN EXPRESSION [LARGE SCALE ANALYSIS]</scope>
</reference>
<name>LIPB_YEAST</name>
<feature type="transit peptide" description="Mitochondrion" evidence="2">
    <location>
        <begin position="1"/>
        <end status="unknown"/>
    </location>
</feature>
<feature type="chain" id="PRO_0000017859" description="Octanoyltransferase, mitochondrial">
    <location>
        <begin status="unknown"/>
        <end position="328"/>
    </location>
</feature>
<feature type="domain" description="BPL/LPL catalytic" evidence="3">
    <location>
        <begin position="108"/>
        <end position="312"/>
    </location>
</feature>
<feature type="active site" description="Acyl-thioester intermediate" evidence="1">
    <location>
        <position position="272"/>
    </location>
</feature>
<feature type="binding site" evidence="1">
    <location>
        <begin position="162"/>
        <end position="169"/>
    </location>
    <ligand>
        <name>substrate</name>
    </ligand>
</feature>
<feature type="binding site" evidence="1">
    <location>
        <begin position="241"/>
        <end position="243"/>
    </location>
    <ligand>
        <name>substrate</name>
    </ligand>
</feature>
<feature type="binding site" evidence="1">
    <location>
        <begin position="254"/>
        <end position="256"/>
    </location>
    <ligand>
        <name>substrate</name>
    </ligand>
</feature>
<feature type="site" description="Lowers pKa of active site Cys" evidence="1">
    <location>
        <position position="238"/>
    </location>
</feature>
<accession>Q06005</accession>
<accession>D6VYN7</accession>